<reference key="1">
    <citation type="journal article" date="2009" name="PLoS Pathog.">
        <title>Molecular evolutionary consequences of niche restriction in Francisella tularensis, a facultative intracellular pathogen.</title>
        <authorList>
            <person name="Larsson P."/>
            <person name="Elfsmark D."/>
            <person name="Svensson K."/>
            <person name="Wikstroem P."/>
            <person name="Forsman M."/>
            <person name="Brettin T."/>
            <person name="Keim P."/>
            <person name="Johansson A."/>
        </authorList>
    </citation>
    <scope>NUCLEOTIDE SEQUENCE [LARGE SCALE GENOMIC DNA]</scope>
    <source>
        <strain>FSC147</strain>
    </source>
</reference>
<evidence type="ECO:0000255" key="1">
    <source>
        <dbReference type="HAMAP-Rule" id="MF_00087"/>
    </source>
</evidence>
<proteinExistence type="inferred from homology"/>
<protein>
    <recommendedName>
        <fullName evidence="1">Glutamyl-tRNA reductase</fullName>
        <shortName evidence="1">GluTR</shortName>
        <ecNumber evidence="1">1.2.1.70</ecNumber>
    </recommendedName>
</protein>
<accession>B2SFF5</accession>
<organism>
    <name type="scientific">Francisella tularensis subsp. mediasiatica (strain FSC147)</name>
    <dbReference type="NCBI Taxonomy" id="441952"/>
    <lineage>
        <taxon>Bacteria</taxon>
        <taxon>Pseudomonadati</taxon>
        <taxon>Pseudomonadota</taxon>
        <taxon>Gammaproteobacteria</taxon>
        <taxon>Thiotrichales</taxon>
        <taxon>Francisellaceae</taxon>
        <taxon>Francisella</taxon>
    </lineage>
</organism>
<sequence>MALISLAIDYKKSPIEVRSEFALSGLDVSMLYRSILAIDNVVHAVILSTCNRTEVYLEISDLRVVDDILVWWQGYVRNPNYKIKDYFKLRQGTEVIMHLMKLACGLESMVLGEPQILGQVKDSYTLSKKNHAIGKELDRVFQKVFATAKRVRSETRIGHCPVSVAFSAITLAKRQLDNISSKNVLIIGAGQTGELLFRHVTALAPKQIMLANRTIEKAQKITSAFRNASAHYLSELPQLIKKADIIIAAVNVLEYIVTCKYVGDKPRVFIDISIPQALDPKLGELEQNVYYCVDDINAVIEDNKDKRKYESSKAQKIIVKSLEEYLEKEKAIISNSAIKELFQKADGLVDLSLEKSLAKIRNGKDAEEIIKRFAYEIKKKVLHYPVVGMKEASKQGRSDCLVCMKRMFGLNVEK</sequence>
<keyword id="KW-0521">NADP</keyword>
<keyword id="KW-0560">Oxidoreductase</keyword>
<keyword id="KW-0627">Porphyrin biosynthesis</keyword>
<name>HEM1_FRATM</name>
<feature type="chain" id="PRO_1000093138" description="Glutamyl-tRNA reductase">
    <location>
        <begin position="1"/>
        <end position="414"/>
    </location>
</feature>
<feature type="active site" description="Nucleophile" evidence="1">
    <location>
        <position position="50"/>
    </location>
</feature>
<feature type="binding site" evidence="1">
    <location>
        <begin position="49"/>
        <end position="52"/>
    </location>
    <ligand>
        <name>substrate</name>
    </ligand>
</feature>
<feature type="binding site" evidence="1">
    <location>
        <position position="108"/>
    </location>
    <ligand>
        <name>substrate</name>
    </ligand>
</feature>
<feature type="binding site" evidence="1">
    <location>
        <begin position="113"/>
        <end position="115"/>
    </location>
    <ligand>
        <name>substrate</name>
    </ligand>
</feature>
<feature type="binding site" evidence="1">
    <location>
        <position position="119"/>
    </location>
    <ligand>
        <name>substrate</name>
    </ligand>
</feature>
<feature type="binding site" evidence="1">
    <location>
        <begin position="188"/>
        <end position="193"/>
    </location>
    <ligand>
        <name>NADP(+)</name>
        <dbReference type="ChEBI" id="CHEBI:58349"/>
    </ligand>
</feature>
<feature type="site" description="Important for activity" evidence="1">
    <location>
        <position position="98"/>
    </location>
</feature>
<dbReference type="EC" id="1.2.1.70" evidence="1"/>
<dbReference type="EMBL" id="CP000915">
    <property type="protein sequence ID" value="ACD30308.1"/>
    <property type="molecule type" value="Genomic_DNA"/>
</dbReference>
<dbReference type="SMR" id="B2SFF5"/>
<dbReference type="KEGG" id="ftm:FTM_0231"/>
<dbReference type="HOGENOM" id="CLU_035113_1_0_6"/>
<dbReference type="UniPathway" id="UPA00251">
    <property type="reaction ID" value="UER00316"/>
</dbReference>
<dbReference type="GO" id="GO:0008883">
    <property type="term" value="F:glutamyl-tRNA reductase activity"/>
    <property type="evidence" value="ECO:0007669"/>
    <property type="project" value="UniProtKB-UniRule"/>
</dbReference>
<dbReference type="GO" id="GO:0050661">
    <property type="term" value="F:NADP binding"/>
    <property type="evidence" value="ECO:0007669"/>
    <property type="project" value="InterPro"/>
</dbReference>
<dbReference type="GO" id="GO:0019353">
    <property type="term" value="P:protoporphyrinogen IX biosynthetic process from glutamate"/>
    <property type="evidence" value="ECO:0007669"/>
    <property type="project" value="TreeGrafter"/>
</dbReference>
<dbReference type="CDD" id="cd05213">
    <property type="entry name" value="NAD_bind_Glutamyl_tRNA_reduct"/>
    <property type="match status" value="1"/>
</dbReference>
<dbReference type="FunFam" id="3.30.460.30:FF:000001">
    <property type="entry name" value="Glutamyl-tRNA reductase"/>
    <property type="match status" value="1"/>
</dbReference>
<dbReference type="Gene3D" id="3.30.460.30">
    <property type="entry name" value="Glutamyl-tRNA reductase, N-terminal domain"/>
    <property type="match status" value="1"/>
</dbReference>
<dbReference type="Gene3D" id="3.40.50.720">
    <property type="entry name" value="NAD(P)-binding Rossmann-like Domain"/>
    <property type="match status" value="1"/>
</dbReference>
<dbReference type="HAMAP" id="MF_00087">
    <property type="entry name" value="Glu_tRNA_reductase"/>
    <property type="match status" value="1"/>
</dbReference>
<dbReference type="InterPro" id="IPR000343">
    <property type="entry name" value="4pyrrol_synth_GluRdtase"/>
</dbReference>
<dbReference type="InterPro" id="IPR015896">
    <property type="entry name" value="4pyrrol_synth_GluRdtase_dimer"/>
</dbReference>
<dbReference type="InterPro" id="IPR015895">
    <property type="entry name" value="4pyrrol_synth_GluRdtase_N"/>
</dbReference>
<dbReference type="InterPro" id="IPR018214">
    <property type="entry name" value="GluRdtase_CS"/>
</dbReference>
<dbReference type="InterPro" id="IPR036453">
    <property type="entry name" value="GluRdtase_dimer_dom_sf"/>
</dbReference>
<dbReference type="InterPro" id="IPR036343">
    <property type="entry name" value="GluRdtase_N_sf"/>
</dbReference>
<dbReference type="InterPro" id="IPR036291">
    <property type="entry name" value="NAD(P)-bd_dom_sf"/>
</dbReference>
<dbReference type="InterPro" id="IPR006151">
    <property type="entry name" value="Shikm_DH/Glu-tRNA_Rdtase"/>
</dbReference>
<dbReference type="NCBIfam" id="TIGR01035">
    <property type="entry name" value="hemA"/>
    <property type="match status" value="1"/>
</dbReference>
<dbReference type="NCBIfam" id="NF010548">
    <property type="entry name" value="PRK13940.1"/>
    <property type="match status" value="1"/>
</dbReference>
<dbReference type="PANTHER" id="PTHR43013">
    <property type="entry name" value="GLUTAMYL-TRNA REDUCTASE"/>
    <property type="match status" value="1"/>
</dbReference>
<dbReference type="PANTHER" id="PTHR43013:SF1">
    <property type="entry name" value="GLUTAMYL-TRNA REDUCTASE"/>
    <property type="match status" value="1"/>
</dbReference>
<dbReference type="Pfam" id="PF00745">
    <property type="entry name" value="GlutR_dimer"/>
    <property type="match status" value="1"/>
</dbReference>
<dbReference type="Pfam" id="PF05201">
    <property type="entry name" value="GlutR_N"/>
    <property type="match status" value="1"/>
</dbReference>
<dbReference type="Pfam" id="PF01488">
    <property type="entry name" value="Shikimate_DH"/>
    <property type="match status" value="1"/>
</dbReference>
<dbReference type="PIRSF" id="PIRSF000445">
    <property type="entry name" value="4pyrrol_synth_GluRdtase"/>
    <property type="match status" value="1"/>
</dbReference>
<dbReference type="SUPFAM" id="SSF69742">
    <property type="entry name" value="Glutamyl tRNA-reductase catalytic, N-terminal domain"/>
    <property type="match status" value="1"/>
</dbReference>
<dbReference type="SUPFAM" id="SSF69075">
    <property type="entry name" value="Glutamyl tRNA-reductase dimerization domain"/>
    <property type="match status" value="1"/>
</dbReference>
<dbReference type="SUPFAM" id="SSF51735">
    <property type="entry name" value="NAD(P)-binding Rossmann-fold domains"/>
    <property type="match status" value="1"/>
</dbReference>
<dbReference type="PROSITE" id="PS00747">
    <property type="entry name" value="GLUTR"/>
    <property type="match status" value="1"/>
</dbReference>
<comment type="function">
    <text evidence="1">Catalyzes the NADPH-dependent reduction of glutamyl-tRNA(Glu) to glutamate 1-semialdehyde (GSA).</text>
</comment>
<comment type="catalytic activity">
    <reaction evidence="1">
        <text>(S)-4-amino-5-oxopentanoate + tRNA(Glu) + NADP(+) = L-glutamyl-tRNA(Glu) + NADPH + H(+)</text>
        <dbReference type="Rhea" id="RHEA:12344"/>
        <dbReference type="Rhea" id="RHEA-COMP:9663"/>
        <dbReference type="Rhea" id="RHEA-COMP:9680"/>
        <dbReference type="ChEBI" id="CHEBI:15378"/>
        <dbReference type="ChEBI" id="CHEBI:57501"/>
        <dbReference type="ChEBI" id="CHEBI:57783"/>
        <dbReference type="ChEBI" id="CHEBI:58349"/>
        <dbReference type="ChEBI" id="CHEBI:78442"/>
        <dbReference type="ChEBI" id="CHEBI:78520"/>
        <dbReference type="EC" id="1.2.1.70"/>
    </reaction>
</comment>
<comment type="pathway">
    <text evidence="1">Porphyrin-containing compound metabolism; protoporphyrin-IX biosynthesis; 5-aminolevulinate from L-glutamyl-tRNA(Glu): step 1/2.</text>
</comment>
<comment type="subunit">
    <text evidence="1">Homodimer.</text>
</comment>
<comment type="domain">
    <text evidence="1">Possesses an unusual extended V-shaped dimeric structure with each monomer consisting of three distinct domains arranged along a curved 'spinal' alpha-helix. The N-terminal catalytic domain specifically recognizes the glutamate moiety of the substrate. The second domain is the NADPH-binding domain, and the third C-terminal domain is responsible for dimerization.</text>
</comment>
<comment type="miscellaneous">
    <text evidence="1">During catalysis, the active site Cys acts as a nucleophile attacking the alpha-carbonyl group of tRNA-bound glutamate with the formation of a thioester intermediate between enzyme and glutamate, and the concomitant release of tRNA(Glu). The thioester intermediate is finally reduced by direct hydride transfer from NADPH, to form the product GSA.</text>
</comment>
<comment type="similarity">
    <text evidence="1">Belongs to the glutamyl-tRNA reductase family.</text>
</comment>
<gene>
    <name evidence="1" type="primary">hemA</name>
    <name type="ordered locus">FTM_0231</name>
</gene>